<name>LMBD1_DICDI</name>
<protein>
    <recommendedName>
        <fullName>Probable lysosomal cobalamin transporter</fullName>
    </recommendedName>
    <alternativeName>
        <fullName>LMBR1 domain-containing protein 1 homolog</fullName>
    </alternativeName>
</protein>
<keyword id="KW-0846">Cobalamin</keyword>
<keyword id="KW-0170">Cobalt</keyword>
<keyword id="KW-0458">Lysosome</keyword>
<keyword id="KW-0472">Membrane</keyword>
<keyword id="KW-1185">Reference proteome</keyword>
<keyword id="KW-0812">Transmembrane</keyword>
<keyword id="KW-1133">Transmembrane helix</keyword>
<keyword id="KW-0813">Transport</keyword>
<evidence type="ECO:0000250" key="1"/>
<evidence type="ECO:0000255" key="2"/>
<evidence type="ECO:0000305" key="3"/>
<accession>Q54KD1</accession>
<organism>
    <name type="scientific">Dictyostelium discoideum</name>
    <name type="common">Social amoeba</name>
    <dbReference type="NCBI Taxonomy" id="44689"/>
    <lineage>
        <taxon>Eukaryota</taxon>
        <taxon>Amoebozoa</taxon>
        <taxon>Evosea</taxon>
        <taxon>Eumycetozoa</taxon>
        <taxon>Dictyostelia</taxon>
        <taxon>Dictyosteliales</taxon>
        <taxon>Dictyosteliaceae</taxon>
        <taxon>Dictyostelium</taxon>
    </lineage>
</organism>
<proteinExistence type="inferred from homology"/>
<feature type="chain" id="PRO_0000328537" description="Probable lysosomal cobalamin transporter">
    <location>
        <begin position="1"/>
        <end position="510"/>
    </location>
</feature>
<feature type="transmembrane region" description="Helical" evidence="2">
    <location>
        <begin position="1"/>
        <end position="21"/>
    </location>
</feature>
<feature type="topological domain" description="Extracellular" evidence="2">
    <location>
        <begin position="22"/>
        <end position="40"/>
    </location>
</feature>
<feature type="transmembrane region" description="Helical" evidence="2">
    <location>
        <begin position="41"/>
        <end position="61"/>
    </location>
</feature>
<feature type="topological domain" description="Cytoplasmic" evidence="2">
    <location>
        <begin position="62"/>
        <end position="88"/>
    </location>
</feature>
<feature type="transmembrane region" description="Helical" evidence="2">
    <location>
        <begin position="89"/>
        <end position="109"/>
    </location>
</feature>
<feature type="topological domain" description="Extracellular" evidence="2">
    <location>
        <begin position="110"/>
        <end position="129"/>
    </location>
</feature>
<feature type="transmembrane region" description="Helical" evidence="2">
    <location>
        <begin position="130"/>
        <end position="150"/>
    </location>
</feature>
<feature type="topological domain" description="Cytoplasmic" evidence="2">
    <location>
        <begin position="151"/>
        <end position="178"/>
    </location>
</feature>
<feature type="transmembrane region" description="Helical" evidence="2">
    <location>
        <begin position="179"/>
        <end position="199"/>
    </location>
</feature>
<feature type="topological domain" description="Extracellular" evidence="2">
    <location>
        <begin position="200"/>
        <end position="289"/>
    </location>
</feature>
<feature type="transmembrane region" description="Helical" evidence="2">
    <location>
        <begin position="290"/>
        <end position="310"/>
    </location>
</feature>
<feature type="topological domain" description="Cytoplasmic" evidence="2">
    <location>
        <begin position="311"/>
        <end position="345"/>
    </location>
</feature>
<feature type="transmembrane region" description="Helical" evidence="2">
    <location>
        <begin position="346"/>
        <end position="366"/>
    </location>
</feature>
<feature type="topological domain" description="Extracellular" evidence="2">
    <location>
        <begin position="367"/>
        <end position="395"/>
    </location>
</feature>
<feature type="transmembrane region" description="Helical" evidence="2">
    <location>
        <begin position="396"/>
        <end position="416"/>
    </location>
</feature>
<feature type="topological domain" description="Cytoplasmic" evidence="2">
    <location>
        <begin position="417"/>
        <end position="465"/>
    </location>
</feature>
<feature type="transmembrane region" description="Helical" evidence="2">
    <location>
        <begin position="466"/>
        <end position="486"/>
    </location>
</feature>
<feature type="topological domain" description="Extracellular" evidence="2">
    <location>
        <begin position="487"/>
        <end position="510"/>
    </location>
</feature>
<comment type="function">
    <text evidence="1">Probable lysosomal cobalamin transporter. Required to export cobalamin from lysosomes allowing its conversion to cofactors (By similarity).</text>
</comment>
<comment type="subcellular location">
    <subcellularLocation>
        <location evidence="1">Lysosome membrane</location>
        <topology evidence="1">Multi-pass membrane protein</topology>
    </subcellularLocation>
</comment>
<comment type="similarity">
    <text evidence="3">Belongs to the LIMR family. LMBRD1 subfamily.</text>
</comment>
<dbReference type="EMBL" id="AAFI02000100">
    <property type="protein sequence ID" value="EAL63770.1"/>
    <property type="molecule type" value="Genomic_DNA"/>
</dbReference>
<dbReference type="RefSeq" id="XP_637292.1">
    <property type="nucleotide sequence ID" value="XM_632200.1"/>
</dbReference>
<dbReference type="SMR" id="Q54KD1"/>
<dbReference type="FunCoup" id="Q54KD1">
    <property type="interactions" value="74"/>
</dbReference>
<dbReference type="PaxDb" id="44689-DDB0235221"/>
<dbReference type="EnsemblProtists" id="EAL63770">
    <property type="protein sequence ID" value="EAL63770"/>
    <property type="gene ID" value="DDB_G0287405"/>
</dbReference>
<dbReference type="GeneID" id="8626124"/>
<dbReference type="KEGG" id="ddi:DDB_G0287405"/>
<dbReference type="dictyBase" id="DDB_G0287405"/>
<dbReference type="VEuPathDB" id="AmoebaDB:DDB_G0287405"/>
<dbReference type="eggNOG" id="ENOG502QQ2T">
    <property type="taxonomic scope" value="Eukaryota"/>
</dbReference>
<dbReference type="HOGENOM" id="CLU_028341_1_0_1"/>
<dbReference type="InParanoid" id="Q54KD1"/>
<dbReference type="OMA" id="FWAQFVF"/>
<dbReference type="PhylomeDB" id="Q54KD1"/>
<dbReference type="Reactome" id="R-DDI-9758881">
    <property type="pathway name" value="Uptake of dietary cobalamins into enterocytes"/>
</dbReference>
<dbReference type="Reactome" id="R-DDI-9758890">
    <property type="pathway name" value="Transport of RCbl within the body"/>
</dbReference>
<dbReference type="PRO" id="PR:Q54KD1"/>
<dbReference type="Proteomes" id="UP000002195">
    <property type="component" value="Chromosome 5"/>
</dbReference>
<dbReference type="GO" id="GO:0005765">
    <property type="term" value="C:lysosomal membrane"/>
    <property type="evidence" value="ECO:0007669"/>
    <property type="project" value="UniProtKB-SubCell"/>
</dbReference>
<dbReference type="GO" id="GO:0005774">
    <property type="term" value="C:vacuolar membrane"/>
    <property type="evidence" value="ECO:0000318"/>
    <property type="project" value="GO_Central"/>
</dbReference>
<dbReference type="GO" id="GO:0031419">
    <property type="term" value="F:cobalamin binding"/>
    <property type="evidence" value="ECO:0007669"/>
    <property type="project" value="UniProtKB-KW"/>
</dbReference>
<dbReference type="GO" id="GO:0072665">
    <property type="term" value="P:protein localization to vacuole"/>
    <property type="evidence" value="ECO:0000318"/>
    <property type="project" value="GO_Central"/>
</dbReference>
<dbReference type="InterPro" id="IPR050854">
    <property type="entry name" value="LMBD1_LysCbl_Transport"/>
</dbReference>
<dbReference type="InterPro" id="IPR006876">
    <property type="entry name" value="LMBR1-like_membr_prot"/>
</dbReference>
<dbReference type="PANTHER" id="PTHR16130:SF2">
    <property type="entry name" value="LYSOSOMAL COBALAMIN TRANSPORT ESCORT PROTEIN LMBD1"/>
    <property type="match status" value="1"/>
</dbReference>
<dbReference type="PANTHER" id="PTHR16130">
    <property type="entry name" value="LYSOSOMAL COBALAMIN TRANSPORTER-RELATED"/>
    <property type="match status" value="1"/>
</dbReference>
<dbReference type="Pfam" id="PF04791">
    <property type="entry name" value="LMBR1"/>
    <property type="match status" value="1"/>
</dbReference>
<sequence>MFPISVGWIAFAGVLLTLIALNYFIVKYYSDKHESGKITTIISVIGLTLTLLCVMLIPVDILNVSTMSHSDGTQISPYSISQRTEGVKMLYYILYGSILGVSLILVPFAYFYHEEYDENIPTCSRVYAGCKFTIFFILFTIILLVVGAFVRPGSKPIDDQNVKDWINDEVLNQNAIESSVLFAISCLTVLGFLVFAVYTSYGLSAFPIGLIKGKKRTDDDKSDINKDLWKAKEKSSFYSSKYASGKSLSEKEQSTLSLLRGKERALSKRSERLDNSNKGFRKILVIFRPFAFIFGFIFILVSLLIIISIVLSLVDKISSSVCGSACGFLSTYPQLKNPFDIILTKLAPYFPLDYIIIGGLIFFIYSCTLSGITRIGIRFLWINMFEFGYRKTFPQGLLLASVLLMLSNLCLNMQIVNLAPRYVMYGAQVYLNGTSVIPCTINAPTDLCIMSEIGLLTSRIQLGISFFGIVFYYGTWVIVATFILGLAVSIFKRRPSAALSYSGDSDEEEI</sequence>
<gene>
    <name type="primary">lmbrd1</name>
    <name type="ORF">DDB_G0287405</name>
</gene>
<reference key="1">
    <citation type="journal article" date="2005" name="Nature">
        <title>The genome of the social amoeba Dictyostelium discoideum.</title>
        <authorList>
            <person name="Eichinger L."/>
            <person name="Pachebat J.A."/>
            <person name="Gloeckner G."/>
            <person name="Rajandream M.A."/>
            <person name="Sucgang R."/>
            <person name="Berriman M."/>
            <person name="Song J."/>
            <person name="Olsen R."/>
            <person name="Szafranski K."/>
            <person name="Xu Q."/>
            <person name="Tunggal B."/>
            <person name="Kummerfeld S."/>
            <person name="Madera M."/>
            <person name="Konfortov B.A."/>
            <person name="Rivero F."/>
            <person name="Bankier A.T."/>
            <person name="Lehmann R."/>
            <person name="Hamlin N."/>
            <person name="Davies R."/>
            <person name="Gaudet P."/>
            <person name="Fey P."/>
            <person name="Pilcher K."/>
            <person name="Chen G."/>
            <person name="Saunders D."/>
            <person name="Sodergren E.J."/>
            <person name="Davis P."/>
            <person name="Kerhornou A."/>
            <person name="Nie X."/>
            <person name="Hall N."/>
            <person name="Anjard C."/>
            <person name="Hemphill L."/>
            <person name="Bason N."/>
            <person name="Farbrother P."/>
            <person name="Desany B."/>
            <person name="Just E."/>
            <person name="Morio T."/>
            <person name="Rost R."/>
            <person name="Churcher C.M."/>
            <person name="Cooper J."/>
            <person name="Haydock S."/>
            <person name="van Driessche N."/>
            <person name="Cronin A."/>
            <person name="Goodhead I."/>
            <person name="Muzny D.M."/>
            <person name="Mourier T."/>
            <person name="Pain A."/>
            <person name="Lu M."/>
            <person name="Harper D."/>
            <person name="Lindsay R."/>
            <person name="Hauser H."/>
            <person name="James K.D."/>
            <person name="Quiles M."/>
            <person name="Madan Babu M."/>
            <person name="Saito T."/>
            <person name="Buchrieser C."/>
            <person name="Wardroper A."/>
            <person name="Felder M."/>
            <person name="Thangavelu M."/>
            <person name="Johnson D."/>
            <person name="Knights A."/>
            <person name="Loulseged H."/>
            <person name="Mungall K.L."/>
            <person name="Oliver K."/>
            <person name="Price C."/>
            <person name="Quail M.A."/>
            <person name="Urushihara H."/>
            <person name="Hernandez J."/>
            <person name="Rabbinowitsch E."/>
            <person name="Steffen D."/>
            <person name="Sanders M."/>
            <person name="Ma J."/>
            <person name="Kohara Y."/>
            <person name="Sharp S."/>
            <person name="Simmonds M.N."/>
            <person name="Spiegler S."/>
            <person name="Tivey A."/>
            <person name="Sugano S."/>
            <person name="White B."/>
            <person name="Walker D."/>
            <person name="Woodward J.R."/>
            <person name="Winckler T."/>
            <person name="Tanaka Y."/>
            <person name="Shaulsky G."/>
            <person name="Schleicher M."/>
            <person name="Weinstock G.M."/>
            <person name="Rosenthal A."/>
            <person name="Cox E.C."/>
            <person name="Chisholm R.L."/>
            <person name="Gibbs R.A."/>
            <person name="Loomis W.F."/>
            <person name="Platzer M."/>
            <person name="Kay R.R."/>
            <person name="Williams J.G."/>
            <person name="Dear P.H."/>
            <person name="Noegel A.A."/>
            <person name="Barrell B.G."/>
            <person name="Kuspa A."/>
        </authorList>
    </citation>
    <scope>NUCLEOTIDE SEQUENCE [LARGE SCALE GENOMIC DNA]</scope>
    <source>
        <strain>AX4</strain>
    </source>
</reference>